<feature type="transit peptide" description="Chloroplast" evidence="1">
    <location>
        <begin position="1"/>
        <end status="unknown"/>
    </location>
</feature>
<feature type="chain" id="PRO_0000007121" description="Omega-3 fatty acid desaturase, chloroplastic">
    <location>
        <begin status="unknown"/>
        <end position="453"/>
    </location>
</feature>
<feature type="short sequence motif" description="Histidine box-1">
    <location>
        <begin position="171"/>
        <end position="175"/>
    </location>
</feature>
<feature type="short sequence motif" description="Histidine box-2">
    <location>
        <begin position="207"/>
        <end position="211"/>
    </location>
</feature>
<feature type="short sequence motif" description="Histidine box-3">
    <location>
        <begin position="374"/>
        <end position="378"/>
    </location>
</feature>
<name>FAD3C_SOYBN</name>
<keyword id="KW-0150">Chloroplast</keyword>
<keyword id="KW-0275">Fatty acid biosynthesis</keyword>
<keyword id="KW-0276">Fatty acid metabolism</keyword>
<keyword id="KW-0444">Lipid biosynthesis</keyword>
<keyword id="KW-0443">Lipid metabolism</keyword>
<keyword id="KW-0472">Membrane</keyword>
<keyword id="KW-0560">Oxidoreductase</keyword>
<keyword id="KW-0934">Plastid</keyword>
<keyword id="KW-1185">Reference proteome</keyword>
<keyword id="KW-0809">Transit peptide</keyword>
<evidence type="ECO:0000255" key="1"/>
<evidence type="ECO:0000305" key="2"/>
<gene>
    <name type="primary">FAD7</name>
</gene>
<dbReference type="EC" id="1.14.19.-"/>
<dbReference type="EMBL" id="L22965">
    <property type="protein sequence ID" value="AAA61776.1"/>
    <property type="molecule type" value="mRNA"/>
</dbReference>
<dbReference type="PIR" id="JQ2339">
    <property type="entry name" value="JQ2339"/>
</dbReference>
<dbReference type="SMR" id="P48621"/>
<dbReference type="FunCoup" id="P48621">
    <property type="interactions" value="1321"/>
</dbReference>
<dbReference type="STRING" id="3847.P48621"/>
<dbReference type="PaxDb" id="3847-GLYMA18G43210.2"/>
<dbReference type="eggNOG" id="ENOG502QQQ2">
    <property type="taxonomic scope" value="Eukaryota"/>
</dbReference>
<dbReference type="HOGENOM" id="CLU_033094_1_0_1"/>
<dbReference type="InParanoid" id="P48621"/>
<dbReference type="UniPathway" id="UPA00658"/>
<dbReference type="Proteomes" id="UP000008827">
    <property type="component" value="Unplaced"/>
</dbReference>
<dbReference type="GO" id="GO:0031969">
    <property type="term" value="C:chloroplast membrane"/>
    <property type="evidence" value="ECO:0007669"/>
    <property type="project" value="UniProtKB-SubCell"/>
</dbReference>
<dbReference type="GO" id="GO:0042389">
    <property type="term" value="F:omega-3 fatty acid desaturase activity"/>
    <property type="evidence" value="ECO:0000318"/>
    <property type="project" value="GO_Central"/>
</dbReference>
<dbReference type="GO" id="GO:0016717">
    <property type="term" value="F:oxidoreductase activity, acting on paired donors, with oxidation of a pair of donors resulting in the reduction of molecular oxygen to two molecules of water"/>
    <property type="evidence" value="ECO:0007669"/>
    <property type="project" value="InterPro"/>
</dbReference>
<dbReference type="GO" id="GO:0006636">
    <property type="term" value="P:unsaturated fatty acid biosynthetic process"/>
    <property type="evidence" value="ECO:0000318"/>
    <property type="project" value="GO_Central"/>
</dbReference>
<dbReference type="CDD" id="cd03507">
    <property type="entry name" value="Delta12-FADS-like"/>
    <property type="match status" value="1"/>
</dbReference>
<dbReference type="InterPro" id="IPR005804">
    <property type="entry name" value="FA_desaturase_dom"/>
</dbReference>
<dbReference type="InterPro" id="IPR021863">
    <property type="entry name" value="FAS_N"/>
</dbReference>
<dbReference type="InterPro" id="IPR012171">
    <property type="entry name" value="Fatty_acid_desaturase"/>
</dbReference>
<dbReference type="PANTHER" id="PTHR32100">
    <property type="entry name" value="OMEGA-6 FATTY ACID DESATURASE, CHLOROPLASTIC"/>
    <property type="match status" value="1"/>
</dbReference>
<dbReference type="Pfam" id="PF11960">
    <property type="entry name" value="DUF3474"/>
    <property type="match status" value="1"/>
</dbReference>
<dbReference type="Pfam" id="PF00487">
    <property type="entry name" value="FA_desaturase"/>
    <property type="match status" value="1"/>
</dbReference>
<sequence>MATWYHQKCGLKPLAPVIPRPRTGAALSSTSRVEFLDTNKVVAGPKFQPLRCNLRERNWGLKVSAPLRVASIEEEQKSVDLTNGTNGVEHEKLPEFDPGAPPPFNLADIRAAIPKHCWVKDPWRSMSYVVRDVIAVFGLAAAAAYLNNWLVWPLYWAAQGTMFWALFVLGHDCGHGSFSNNSKLNSVVGHLLHSSILVPYHGWRISHRTHHQHHGHAENDESWHPLPEKLFRSLDTVTRMLRFTAPFPLLAFPVYLFSRSPGKTGSHFDPSSDLFVPNERKDVITSTACWAAMLGLLVGLGFVMGPIQLLKLYGVPYVIFVMWLDLVTYLHHHGHEDKLPWYRGKEWSYLRGGLTTLDRDYGWINNIHHDIGTHVIHHLFPQIPHYHLVEATEAAKPVFGKYYREPKKSAAPLPFHLIGEIIRSFKTDHFVSDTGDVVYYQTDSKINGSSKLE</sequence>
<accession>P48621</accession>
<comment type="function">
    <text>Chloroplast omega-3 fatty acid desaturase introduces the third double bond in the biosynthesis of 16:3 and 18:3 fatty acids, important constituents of plant membranes. It is thought to use ferredoxin as an electron donor and to act on fatty acids esterified to galactolipids, sulfolipids and phosphatidylglycerol.</text>
</comment>
<comment type="pathway">
    <text>Lipid metabolism; polyunsaturated fatty acid biosynthesis.</text>
</comment>
<comment type="subcellular location">
    <subcellularLocation>
        <location evidence="2">Plastid</location>
        <location evidence="2">Chloroplast membrane</location>
        <topology evidence="2">Peripheral membrane protein</topology>
    </subcellularLocation>
</comment>
<comment type="domain">
    <text>The histidine box domains may contain the active site and/or be involved in metal ion binding.</text>
</comment>
<comment type="similarity">
    <text evidence="2">Belongs to the fatty acid desaturase type 1 family.</text>
</comment>
<proteinExistence type="evidence at transcript level"/>
<organism>
    <name type="scientific">Glycine max</name>
    <name type="common">Soybean</name>
    <name type="synonym">Glycine hispida</name>
    <dbReference type="NCBI Taxonomy" id="3847"/>
    <lineage>
        <taxon>Eukaryota</taxon>
        <taxon>Viridiplantae</taxon>
        <taxon>Streptophyta</taxon>
        <taxon>Embryophyta</taxon>
        <taxon>Tracheophyta</taxon>
        <taxon>Spermatophyta</taxon>
        <taxon>Magnoliopsida</taxon>
        <taxon>eudicotyledons</taxon>
        <taxon>Gunneridae</taxon>
        <taxon>Pentapetalae</taxon>
        <taxon>rosids</taxon>
        <taxon>fabids</taxon>
        <taxon>Fabales</taxon>
        <taxon>Fabaceae</taxon>
        <taxon>Papilionoideae</taxon>
        <taxon>50 kb inversion clade</taxon>
        <taxon>NPAAA clade</taxon>
        <taxon>indigoferoid/millettioid clade</taxon>
        <taxon>Phaseoleae</taxon>
        <taxon>Glycine</taxon>
        <taxon>Glycine subgen. Soja</taxon>
    </lineage>
</organism>
<protein>
    <recommendedName>
        <fullName>Omega-3 fatty acid desaturase, chloroplastic</fullName>
        <ecNumber>1.14.19.-</ecNumber>
    </recommendedName>
</protein>
<reference key="1">
    <citation type="journal article" date="1993" name="Plant Physiol.">
        <title>Cloning of higher plant omega-3 fatty acid desaturases.</title>
        <authorList>
            <person name="Yadav N.S."/>
            <person name="Wierzbicki A."/>
            <person name="Aegerter M."/>
            <person name="Caster C.S."/>
            <person name="Perez-Grau L."/>
            <person name="Kinney A.J."/>
            <person name="Hitz W.D."/>
            <person name="Booth J.R. Jr."/>
            <person name="Schweiger B."/>
            <person name="Stecca K.L."/>
            <person name="Allen S.M."/>
            <person name="Blackwell M."/>
            <person name="Reiter R.S."/>
            <person name="Carlson T.J."/>
            <person name="Russell S.H."/>
            <person name="Feldmann K.A."/>
            <person name="Pierce J."/>
            <person name="Browse J."/>
        </authorList>
    </citation>
    <scope>NUCLEOTIDE SEQUENCE [MRNA]</scope>
    <source>
        <tissue>Seed</tissue>
    </source>
</reference>